<protein>
    <recommendedName>
        <fullName evidence="3">Hydroxypyruvate/pyruvate aldolase Bphyt_5830</fullName>
        <shortName evidence="3">HPA/PA aldolase</shortName>
        <ecNumber evidence="2">4.1.2.-</ecNumber>
    </recommendedName>
</protein>
<sequence>MSLPLNNFKRALAEGKPQFGLWAALADAYVTELLATAGFDWLLIDNEHAPNDVRSTLAQLQAVAAYASHPVVRPVRSDSALIKQLLDIGAQTLLLPMIDTAEQAADAVAATRYPPQGIRGVGSALARASRWNRIPDYLNTAADELCVLVQVESVQGMENLSAIAAVDGVDGVFFGPSDLSASMGLLGKPGDASVREAIRNGIQTVLRAGKAAGVLAPDPAIAADYLEAGATFVAVGTDTGLLSRAAADLAASYKKTATMAASPKGGY</sequence>
<reference key="1">
    <citation type="journal article" date="2011" name="J. Bacteriol.">
        <title>Complete genome sequence of the plant growth-promoting endophyte Burkholderia phytofirmans strain PsJN.</title>
        <authorList>
            <person name="Weilharter A."/>
            <person name="Mitter B."/>
            <person name="Shin M.V."/>
            <person name="Chain P.S."/>
            <person name="Nowak J."/>
            <person name="Sessitsch A."/>
        </authorList>
    </citation>
    <scope>NUCLEOTIDE SEQUENCE [LARGE SCALE GENOMIC DNA]</scope>
    <source>
        <strain>DSM 17436 / LMG 22146 / PsJN</strain>
    </source>
</reference>
<reference key="2">
    <citation type="journal article" date="2017" name="Green Chem.">
        <title>Expanding the reaction space of aldolases using hydroxypyruvate as a nucleophilic substrate.</title>
        <authorList>
            <person name="de Berardinis V."/>
            <person name="Guerard-Helaine C."/>
            <person name="Darii E."/>
            <person name="Bastard K."/>
            <person name="Helaine V."/>
            <person name="Mariage A."/>
            <person name="Petit J.-L."/>
            <person name="Poupard N."/>
            <person name="Sanchez-Moreno I."/>
            <person name="Stam M."/>
            <person name="Gefflaut T."/>
            <person name="Salanoubat M."/>
            <person name="Lemaire M."/>
        </authorList>
    </citation>
    <scope>FUNCTION</scope>
    <scope>CATALYTIC ACTIVITY</scope>
</reference>
<proteinExistence type="evidence at protein level"/>
<evidence type="ECO:0000250" key="1">
    <source>
        <dbReference type="UniProtKB" id="Q47098"/>
    </source>
</evidence>
<evidence type="ECO:0000269" key="2">
    <source ref="2"/>
</evidence>
<evidence type="ECO:0000303" key="3">
    <source ref="2"/>
</evidence>
<evidence type="ECO:0000305" key="4"/>
<evidence type="ECO:0000312" key="5">
    <source>
        <dbReference type="EMBL" id="ACD20166.1"/>
    </source>
</evidence>
<keyword id="KW-0456">Lyase</keyword>
<keyword id="KW-0479">Metal-binding</keyword>
<keyword id="KW-0670">Pyruvate</keyword>
<comment type="function">
    <text evidence="2">Aldolase which can catalyze in vitro the aldolisation reaction between hydroxypyruvate (HPA) or pyruvate (PA) and D-glyceraldehyde (D-GA) (Ref.2). The condensation of hydroxypyruvate and D-glyceraldehyde produces 2-dehydro-D-galactonate as the major product and (3R,4S,5R)-3,4,5,6-tetrahydroxy-2-oxohexanoate (Ref.2). The condensation of pyruvate and D-glyceraldehyde produces 2-dehydro-3-deoxy-L-galactonate (Ref.2).</text>
</comment>
<comment type="catalytic activity">
    <reaction evidence="2">
        <text>D-glyceraldehyde + 3-hydroxypyruvate = 2-dehydro-D-galactonate</text>
        <dbReference type="Rhea" id="RHEA:80051"/>
        <dbReference type="ChEBI" id="CHEBI:17180"/>
        <dbReference type="ChEBI" id="CHEBI:17378"/>
        <dbReference type="ChEBI" id="CHEBI:28023"/>
    </reaction>
</comment>
<comment type="catalytic activity">
    <reaction evidence="2">
        <text>D-glyceraldehyde + 3-hydroxypyruvate = (3R,4S,5R)-3,4,5,6-tetrahydroxy-2-oxohexanoate</text>
        <dbReference type="Rhea" id="RHEA:80047"/>
        <dbReference type="ChEBI" id="CHEBI:17180"/>
        <dbReference type="ChEBI" id="CHEBI:17378"/>
        <dbReference type="ChEBI" id="CHEBI:231434"/>
    </reaction>
</comment>
<comment type="catalytic activity">
    <reaction evidence="2">
        <text>D-glyceraldehyde + pyruvate = 2-dehydro-3-deoxy-L-galactonate</text>
        <dbReference type="Rhea" id="RHEA:80055"/>
        <dbReference type="ChEBI" id="CHEBI:15361"/>
        <dbReference type="ChEBI" id="CHEBI:17378"/>
        <dbReference type="ChEBI" id="CHEBI:75545"/>
    </reaction>
</comment>
<comment type="cofactor">
    <cofactor evidence="1">
        <name>a divalent metal cation</name>
        <dbReference type="ChEBI" id="CHEBI:60240"/>
    </cofactor>
</comment>
<comment type="similarity">
    <text evidence="4">Belongs to the HpcH/HpaI aldolase family.</text>
</comment>
<gene>
    <name evidence="5" type="ordered locus">Bphyt_5830</name>
</gene>
<name>HPAA2_PARPJ</name>
<organism>
    <name type="scientific">Paraburkholderia phytofirmans (strain DSM 17436 / LMG 22146 / PsJN)</name>
    <name type="common">Burkholderia phytofirmans</name>
    <dbReference type="NCBI Taxonomy" id="398527"/>
    <lineage>
        <taxon>Bacteria</taxon>
        <taxon>Pseudomonadati</taxon>
        <taxon>Pseudomonadota</taxon>
        <taxon>Betaproteobacteria</taxon>
        <taxon>Burkholderiales</taxon>
        <taxon>Burkholderiaceae</taxon>
        <taxon>Paraburkholderia</taxon>
    </lineage>
</organism>
<feature type="chain" id="PRO_0000460953" description="Hydroxypyruvate/pyruvate aldolase Bphyt_5830">
    <location>
        <begin position="1"/>
        <end position="267"/>
    </location>
</feature>
<feature type="active site" description="Proton acceptor" evidence="1">
    <location>
        <position position="48"/>
    </location>
</feature>
<feature type="binding site" evidence="1">
    <location>
        <position position="152"/>
    </location>
    <ligand>
        <name>a divalent metal cation</name>
        <dbReference type="ChEBI" id="CHEBI:60240"/>
    </ligand>
</feature>
<feature type="binding site" evidence="1">
    <location>
        <position position="178"/>
    </location>
    <ligand>
        <name>a divalent metal cation</name>
        <dbReference type="ChEBI" id="CHEBI:60240"/>
    </ligand>
</feature>
<feature type="site" description="Transition state stabilizer" evidence="1">
    <location>
        <position position="73"/>
    </location>
</feature>
<feature type="site" description="Increases basicity of active site His" evidence="1">
    <location>
        <position position="87"/>
    </location>
</feature>
<dbReference type="EC" id="4.1.2.-" evidence="2"/>
<dbReference type="EMBL" id="CP001053">
    <property type="protein sequence ID" value="ACD20166.1"/>
    <property type="molecule type" value="Genomic_DNA"/>
</dbReference>
<dbReference type="RefSeq" id="WP_012427675.1">
    <property type="nucleotide sequence ID" value="NC_010676.1"/>
</dbReference>
<dbReference type="SMR" id="B2TGJ0"/>
<dbReference type="STRING" id="398527.Bphyt_5830"/>
<dbReference type="KEGG" id="bpy:Bphyt_5830"/>
<dbReference type="eggNOG" id="COG3836">
    <property type="taxonomic scope" value="Bacteria"/>
</dbReference>
<dbReference type="HOGENOM" id="CLU_059964_1_0_4"/>
<dbReference type="OrthoDB" id="86160at2"/>
<dbReference type="Proteomes" id="UP000001739">
    <property type="component" value="Chromosome 2"/>
</dbReference>
<dbReference type="GO" id="GO:0005737">
    <property type="term" value="C:cytoplasm"/>
    <property type="evidence" value="ECO:0007669"/>
    <property type="project" value="TreeGrafter"/>
</dbReference>
<dbReference type="GO" id="GO:0008672">
    <property type="term" value="F:2-dehydro-3-deoxyglucarate aldolase activity"/>
    <property type="evidence" value="ECO:0007669"/>
    <property type="project" value="UniProtKB-EC"/>
</dbReference>
<dbReference type="GO" id="GO:0046872">
    <property type="term" value="F:metal ion binding"/>
    <property type="evidence" value="ECO:0007669"/>
    <property type="project" value="UniProtKB-KW"/>
</dbReference>
<dbReference type="GO" id="GO:0010124">
    <property type="term" value="P:phenylacetate catabolic process"/>
    <property type="evidence" value="ECO:0007669"/>
    <property type="project" value="InterPro"/>
</dbReference>
<dbReference type="FunFam" id="3.20.20.60:FF:000004">
    <property type="entry name" value="5-keto-4-deoxy-D-glucarate aldolase"/>
    <property type="match status" value="1"/>
</dbReference>
<dbReference type="Gene3D" id="3.20.20.60">
    <property type="entry name" value="Phosphoenolpyruvate-binding domains"/>
    <property type="match status" value="1"/>
</dbReference>
<dbReference type="InterPro" id="IPR005000">
    <property type="entry name" value="Aldolase/citrate-lyase_domain"/>
</dbReference>
<dbReference type="InterPro" id="IPR012689">
    <property type="entry name" value="HpaI"/>
</dbReference>
<dbReference type="InterPro" id="IPR050251">
    <property type="entry name" value="HpcH-HpaI_aldolase"/>
</dbReference>
<dbReference type="InterPro" id="IPR015813">
    <property type="entry name" value="Pyrv/PenolPyrv_kinase-like_dom"/>
</dbReference>
<dbReference type="InterPro" id="IPR040442">
    <property type="entry name" value="Pyrv_kinase-like_dom_sf"/>
</dbReference>
<dbReference type="NCBIfam" id="TIGR02311">
    <property type="entry name" value="HpaI"/>
    <property type="match status" value="1"/>
</dbReference>
<dbReference type="PANTHER" id="PTHR30502">
    <property type="entry name" value="2-KETO-3-DEOXY-L-RHAMNONATE ALDOLASE"/>
    <property type="match status" value="1"/>
</dbReference>
<dbReference type="PANTHER" id="PTHR30502:SF0">
    <property type="entry name" value="PHOSPHOENOLPYRUVATE CARBOXYLASE FAMILY PROTEIN"/>
    <property type="match status" value="1"/>
</dbReference>
<dbReference type="Pfam" id="PF03328">
    <property type="entry name" value="HpcH_HpaI"/>
    <property type="match status" value="1"/>
</dbReference>
<dbReference type="SUPFAM" id="SSF51621">
    <property type="entry name" value="Phosphoenolpyruvate/pyruvate domain"/>
    <property type="match status" value="1"/>
</dbReference>
<accession>B2TGJ0</accession>